<accession>Q6CFV3</accession>
<name>ASA1_YARLI</name>
<dbReference type="EMBL" id="CR382128">
    <property type="protein sequence ID" value="CAG82685.1"/>
    <property type="molecule type" value="Genomic_DNA"/>
</dbReference>
<dbReference type="RefSeq" id="XP_500459.1">
    <property type="nucleotide sequence ID" value="XM_500459.1"/>
</dbReference>
<dbReference type="FunCoup" id="Q6CFV3">
    <property type="interactions" value="51"/>
</dbReference>
<dbReference type="STRING" id="284591.Q6CFV3"/>
<dbReference type="EnsemblFungi" id="CAG82685">
    <property type="protein sequence ID" value="CAG82685"/>
    <property type="gene ID" value="YALI0_B03388g"/>
</dbReference>
<dbReference type="KEGG" id="yli:2907496"/>
<dbReference type="VEuPathDB" id="FungiDB:YALI0_B03388g"/>
<dbReference type="HOGENOM" id="CLU_041940_0_1_1"/>
<dbReference type="InParanoid" id="Q6CFV3"/>
<dbReference type="OMA" id="MQYETHE"/>
<dbReference type="OrthoDB" id="108684at4891"/>
<dbReference type="Proteomes" id="UP000001300">
    <property type="component" value="Chromosome B"/>
</dbReference>
<dbReference type="GO" id="GO:0005634">
    <property type="term" value="C:nucleus"/>
    <property type="evidence" value="ECO:0007669"/>
    <property type="project" value="UniProtKB-SubCell"/>
</dbReference>
<dbReference type="GO" id="GO:0006325">
    <property type="term" value="P:chromatin organization"/>
    <property type="evidence" value="ECO:0007669"/>
    <property type="project" value="UniProtKB-KW"/>
</dbReference>
<dbReference type="Gene3D" id="2.130.10.10">
    <property type="entry name" value="YVTN repeat-like/Quinoprotein amine dehydrogenase"/>
    <property type="match status" value="2"/>
</dbReference>
<dbReference type="InterPro" id="IPR015943">
    <property type="entry name" value="WD40/YVTN_repeat-like_dom_sf"/>
</dbReference>
<dbReference type="InterPro" id="IPR036322">
    <property type="entry name" value="WD40_repeat_dom_sf"/>
</dbReference>
<dbReference type="InterPro" id="IPR001680">
    <property type="entry name" value="WD40_rpt"/>
</dbReference>
<dbReference type="PANTHER" id="PTHR19854:SF1">
    <property type="entry name" value="GUANINE NUCLEOTIDE-BINDING PROTEIN SUBUNIT BETA-LIKE PROTEIN 1"/>
    <property type="match status" value="1"/>
</dbReference>
<dbReference type="PANTHER" id="PTHR19854">
    <property type="entry name" value="TRANSDUCIN BETA-LIKE 3"/>
    <property type="match status" value="1"/>
</dbReference>
<dbReference type="Pfam" id="PF00400">
    <property type="entry name" value="WD40"/>
    <property type="match status" value="2"/>
</dbReference>
<dbReference type="SMART" id="SM00320">
    <property type="entry name" value="WD40"/>
    <property type="match status" value="5"/>
</dbReference>
<dbReference type="SUPFAM" id="SSF50978">
    <property type="entry name" value="WD40 repeat-like"/>
    <property type="match status" value="1"/>
</dbReference>
<dbReference type="PROSITE" id="PS50294">
    <property type="entry name" value="WD_REPEATS_REGION"/>
    <property type="match status" value="1"/>
</dbReference>
<feature type="chain" id="PRO_0000402224" description="ASTRA-associated protein 1">
    <location>
        <begin position="1"/>
        <end position="428"/>
    </location>
</feature>
<feature type="repeat" description="WD 1">
    <location>
        <begin position="15"/>
        <end position="52"/>
    </location>
</feature>
<feature type="repeat" description="WD 2">
    <location>
        <begin position="55"/>
        <end position="93"/>
    </location>
</feature>
<feature type="repeat" description="WD 3">
    <location>
        <begin position="122"/>
        <end position="163"/>
    </location>
</feature>
<feature type="repeat" description="WD 4">
    <location>
        <begin position="171"/>
        <end position="209"/>
    </location>
</feature>
<feature type="repeat" description="WD 5">
    <location>
        <begin position="217"/>
        <end position="259"/>
    </location>
</feature>
<feature type="repeat" description="WD 6">
    <location>
        <begin position="323"/>
        <end position="362"/>
    </location>
</feature>
<feature type="repeat" description="WD 7">
    <location>
        <begin position="364"/>
        <end position="418"/>
    </location>
</feature>
<feature type="region of interest" description="Disordered" evidence="2">
    <location>
        <begin position="250"/>
        <end position="295"/>
    </location>
</feature>
<evidence type="ECO:0000250" key="1"/>
<evidence type="ECO:0000256" key="2">
    <source>
        <dbReference type="SAM" id="MobiDB-lite"/>
    </source>
</evidence>
<evidence type="ECO:0000305" key="3"/>
<organism>
    <name type="scientific">Yarrowia lipolytica (strain CLIB 122 / E 150)</name>
    <name type="common">Yeast</name>
    <name type="synonym">Candida lipolytica</name>
    <dbReference type="NCBI Taxonomy" id="284591"/>
    <lineage>
        <taxon>Eukaryota</taxon>
        <taxon>Fungi</taxon>
        <taxon>Dikarya</taxon>
        <taxon>Ascomycota</taxon>
        <taxon>Saccharomycotina</taxon>
        <taxon>Dipodascomycetes</taxon>
        <taxon>Dipodascales</taxon>
        <taxon>Dipodascales incertae sedis</taxon>
        <taxon>Yarrowia</taxon>
    </lineage>
</organism>
<comment type="function">
    <text evidence="1">Component of the ASTRA complex involved in chromatin remodeling.</text>
</comment>
<comment type="subunit">
    <text evidence="1">Component of the ASTRA chromatin remodeling machinery complex.</text>
</comment>
<comment type="subcellular location">
    <subcellularLocation>
        <location evidence="1">Nucleus</location>
    </subcellularLocation>
</comment>
<comment type="similarity">
    <text evidence="3">Belongs to the WD repeat ASA1 family.</text>
</comment>
<keyword id="KW-0156">Chromatin regulator</keyword>
<keyword id="KW-0539">Nucleus</keyword>
<keyword id="KW-1185">Reference proteome</keyword>
<keyword id="KW-0677">Repeat</keyword>
<keyword id="KW-0853">WD repeat</keyword>
<gene>
    <name type="primary">ASA1</name>
    <name type="ordered locus">YALI0B03388g</name>
</gene>
<sequence length="428" mass="47792">MDLSGAPVPVALLRGHTHPVTSLRFYNAFLVSGDESGWVFWWSLVTRRPLAIWKAHHEAILSLVWMDETHLLTQGRDDKLYVWRLELDAQGKSGLSVKPPSSLVADDPTDYPKPWLTYSLTVNSLNFCQVAWVNGLLAKPDLDSSDKVELLEWTDGAFRVVWNDIYPRLNGIKTGIVMDLNIMNKKLIVGYEGGAVAVFDISDRNRYTPVLNYYVVSHVQPVLSVRAHPTKKEFVSSSADSLIVKHPIKDQVVPEEEMEEPEPAKNSERPPSPKIVEVEDSPELEPPKNVVRGFDVPGLELEEGIEVKEEEKPESKPLDAVNVRHSGLSSLQLDSDGDLIMTAGWDGKVRLFTYDDISKVSVFHEREGVGCVAFSTPTTSDTANPRLAKALTTRWIAVGGKDGKIELYTIQQGNEKTLGEGRSKYIRH</sequence>
<proteinExistence type="inferred from homology"/>
<reference key="1">
    <citation type="journal article" date="2004" name="Nature">
        <title>Genome evolution in yeasts.</title>
        <authorList>
            <person name="Dujon B."/>
            <person name="Sherman D."/>
            <person name="Fischer G."/>
            <person name="Durrens P."/>
            <person name="Casaregola S."/>
            <person name="Lafontaine I."/>
            <person name="de Montigny J."/>
            <person name="Marck C."/>
            <person name="Neuveglise C."/>
            <person name="Talla E."/>
            <person name="Goffard N."/>
            <person name="Frangeul L."/>
            <person name="Aigle M."/>
            <person name="Anthouard V."/>
            <person name="Babour A."/>
            <person name="Barbe V."/>
            <person name="Barnay S."/>
            <person name="Blanchin S."/>
            <person name="Beckerich J.-M."/>
            <person name="Beyne E."/>
            <person name="Bleykasten C."/>
            <person name="Boisrame A."/>
            <person name="Boyer J."/>
            <person name="Cattolico L."/>
            <person name="Confanioleri F."/>
            <person name="de Daruvar A."/>
            <person name="Despons L."/>
            <person name="Fabre E."/>
            <person name="Fairhead C."/>
            <person name="Ferry-Dumazet H."/>
            <person name="Groppi A."/>
            <person name="Hantraye F."/>
            <person name="Hennequin C."/>
            <person name="Jauniaux N."/>
            <person name="Joyet P."/>
            <person name="Kachouri R."/>
            <person name="Kerrest A."/>
            <person name="Koszul R."/>
            <person name="Lemaire M."/>
            <person name="Lesur I."/>
            <person name="Ma L."/>
            <person name="Muller H."/>
            <person name="Nicaud J.-M."/>
            <person name="Nikolski M."/>
            <person name="Oztas S."/>
            <person name="Ozier-Kalogeropoulos O."/>
            <person name="Pellenz S."/>
            <person name="Potier S."/>
            <person name="Richard G.-F."/>
            <person name="Straub M.-L."/>
            <person name="Suleau A."/>
            <person name="Swennen D."/>
            <person name="Tekaia F."/>
            <person name="Wesolowski-Louvel M."/>
            <person name="Westhof E."/>
            <person name="Wirth B."/>
            <person name="Zeniou-Meyer M."/>
            <person name="Zivanovic Y."/>
            <person name="Bolotin-Fukuhara M."/>
            <person name="Thierry A."/>
            <person name="Bouchier C."/>
            <person name="Caudron B."/>
            <person name="Scarpelli C."/>
            <person name="Gaillardin C."/>
            <person name="Weissenbach J."/>
            <person name="Wincker P."/>
            <person name="Souciet J.-L."/>
        </authorList>
    </citation>
    <scope>NUCLEOTIDE SEQUENCE [LARGE SCALE GENOMIC DNA]</scope>
    <source>
        <strain>CLIB 122 / E 150</strain>
    </source>
</reference>
<protein>
    <recommendedName>
        <fullName>ASTRA-associated protein 1</fullName>
    </recommendedName>
</protein>